<reference key="1">
    <citation type="journal article" date="1985" name="J. Mol. Biol.">
        <title>Sequence and structure of the serendipity locus of Drosophila melanogaster. A densely transcribed region including a blastoderm-specific gene.</title>
        <authorList>
            <person name="Vincent A."/>
            <person name="Colot H.V."/>
            <person name="Rosbash M."/>
        </authorList>
    </citation>
    <scope>NUCLEOTIDE SEQUENCE [GENOMIC DNA]</scope>
    <source>
        <strain>Oregon-R</strain>
    </source>
</reference>
<reference key="2">
    <citation type="journal article" date="2000" name="Science">
        <title>The genome sequence of Drosophila melanogaster.</title>
        <authorList>
            <person name="Adams M.D."/>
            <person name="Celniker S.E."/>
            <person name="Holt R.A."/>
            <person name="Evans C.A."/>
            <person name="Gocayne J.D."/>
            <person name="Amanatides P.G."/>
            <person name="Scherer S.E."/>
            <person name="Li P.W."/>
            <person name="Hoskins R.A."/>
            <person name="Galle R.F."/>
            <person name="George R.A."/>
            <person name="Lewis S.E."/>
            <person name="Richards S."/>
            <person name="Ashburner M."/>
            <person name="Henderson S.N."/>
            <person name="Sutton G.G."/>
            <person name="Wortman J.R."/>
            <person name="Yandell M.D."/>
            <person name="Zhang Q."/>
            <person name="Chen L.X."/>
            <person name="Brandon R.C."/>
            <person name="Rogers Y.-H.C."/>
            <person name="Blazej R.G."/>
            <person name="Champe M."/>
            <person name="Pfeiffer B.D."/>
            <person name="Wan K.H."/>
            <person name="Doyle C."/>
            <person name="Baxter E.G."/>
            <person name="Helt G."/>
            <person name="Nelson C.R."/>
            <person name="Miklos G.L.G."/>
            <person name="Abril J.F."/>
            <person name="Agbayani A."/>
            <person name="An H.-J."/>
            <person name="Andrews-Pfannkoch C."/>
            <person name="Baldwin D."/>
            <person name="Ballew R.M."/>
            <person name="Basu A."/>
            <person name="Baxendale J."/>
            <person name="Bayraktaroglu L."/>
            <person name="Beasley E.M."/>
            <person name="Beeson K.Y."/>
            <person name="Benos P.V."/>
            <person name="Berman B.P."/>
            <person name="Bhandari D."/>
            <person name="Bolshakov S."/>
            <person name="Borkova D."/>
            <person name="Botchan M.R."/>
            <person name="Bouck J."/>
            <person name="Brokstein P."/>
            <person name="Brottier P."/>
            <person name="Burtis K.C."/>
            <person name="Busam D.A."/>
            <person name="Butler H."/>
            <person name="Cadieu E."/>
            <person name="Center A."/>
            <person name="Chandra I."/>
            <person name="Cherry J.M."/>
            <person name="Cawley S."/>
            <person name="Dahlke C."/>
            <person name="Davenport L.B."/>
            <person name="Davies P."/>
            <person name="de Pablos B."/>
            <person name="Delcher A."/>
            <person name="Deng Z."/>
            <person name="Mays A.D."/>
            <person name="Dew I."/>
            <person name="Dietz S.M."/>
            <person name="Dodson K."/>
            <person name="Doup L.E."/>
            <person name="Downes M."/>
            <person name="Dugan-Rocha S."/>
            <person name="Dunkov B.C."/>
            <person name="Dunn P."/>
            <person name="Durbin K.J."/>
            <person name="Evangelista C.C."/>
            <person name="Ferraz C."/>
            <person name="Ferriera S."/>
            <person name="Fleischmann W."/>
            <person name="Fosler C."/>
            <person name="Gabrielian A.E."/>
            <person name="Garg N.S."/>
            <person name="Gelbart W.M."/>
            <person name="Glasser K."/>
            <person name="Glodek A."/>
            <person name="Gong F."/>
            <person name="Gorrell J.H."/>
            <person name="Gu Z."/>
            <person name="Guan P."/>
            <person name="Harris M."/>
            <person name="Harris N.L."/>
            <person name="Harvey D.A."/>
            <person name="Heiman T.J."/>
            <person name="Hernandez J.R."/>
            <person name="Houck J."/>
            <person name="Hostin D."/>
            <person name="Houston K.A."/>
            <person name="Howland T.J."/>
            <person name="Wei M.-H."/>
            <person name="Ibegwam C."/>
            <person name="Jalali M."/>
            <person name="Kalush F."/>
            <person name="Karpen G.H."/>
            <person name="Ke Z."/>
            <person name="Kennison J.A."/>
            <person name="Ketchum K.A."/>
            <person name="Kimmel B.E."/>
            <person name="Kodira C.D."/>
            <person name="Kraft C.L."/>
            <person name="Kravitz S."/>
            <person name="Kulp D."/>
            <person name="Lai Z."/>
            <person name="Lasko P."/>
            <person name="Lei Y."/>
            <person name="Levitsky A.A."/>
            <person name="Li J.H."/>
            <person name="Li Z."/>
            <person name="Liang Y."/>
            <person name="Lin X."/>
            <person name="Liu X."/>
            <person name="Mattei B."/>
            <person name="McIntosh T.C."/>
            <person name="McLeod M.P."/>
            <person name="McPherson D."/>
            <person name="Merkulov G."/>
            <person name="Milshina N.V."/>
            <person name="Mobarry C."/>
            <person name="Morris J."/>
            <person name="Moshrefi A."/>
            <person name="Mount S.M."/>
            <person name="Moy M."/>
            <person name="Murphy B."/>
            <person name="Murphy L."/>
            <person name="Muzny D.M."/>
            <person name="Nelson D.L."/>
            <person name="Nelson D.R."/>
            <person name="Nelson K.A."/>
            <person name="Nixon K."/>
            <person name="Nusskern D.R."/>
            <person name="Pacleb J.M."/>
            <person name="Palazzolo M."/>
            <person name="Pittman G.S."/>
            <person name="Pan S."/>
            <person name="Pollard J."/>
            <person name="Puri V."/>
            <person name="Reese M.G."/>
            <person name="Reinert K."/>
            <person name="Remington K."/>
            <person name="Saunders R.D.C."/>
            <person name="Scheeler F."/>
            <person name="Shen H."/>
            <person name="Shue B.C."/>
            <person name="Siden-Kiamos I."/>
            <person name="Simpson M."/>
            <person name="Skupski M.P."/>
            <person name="Smith T.J."/>
            <person name="Spier E."/>
            <person name="Spradling A.C."/>
            <person name="Stapleton M."/>
            <person name="Strong R."/>
            <person name="Sun E."/>
            <person name="Svirskas R."/>
            <person name="Tector C."/>
            <person name="Turner R."/>
            <person name="Venter E."/>
            <person name="Wang A.H."/>
            <person name="Wang X."/>
            <person name="Wang Z.-Y."/>
            <person name="Wassarman D.A."/>
            <person name="Weinstock G.M."/>
            <person name="Weissenbach J."/>
            <person name="Williams S.M."/>
            <person name="Woodage T."/>
            <person name="Worley K.C."/>
            <person name="Wu D."/>
            <person name="Yang S."/>
            <person name="Yao Q.A."/>
            <person name="Ye J."/>
            <person name="Yeh R.-F."/>
            <person name="Zaveri J.S."/>
            <person name="Zhan M."/>
            <person name="Zhang G."/>
            <person name="Zhao Q."/>
            <person name="Zheng L."/>
            <person name="Zheng X.H."/>
            <person name="Zhong F.N."/>
            <person name="Zhong W."/>
            <person name="Zhou X."/>
            <person name="Zhu S.C."/>
            <person name="Zhu X."/>
            <person name="Smith H.O."/>
            <person name="Gibbs R.A."/>
            <person name="Myers E.W."/>
            <person name="Rubin G.M."/>
            <person name="Venter J.C."/>
        </authorList>
    </citation>
    <scope>NUCLEOTIDE SEQUENCE [LARGE SCALE GENOMIC DNA]</scope>
    <source>
        <strain>Berkeley</strain>
    </source>
</reference>
<reference key="3">
    <citation type="journal article" date="2002" name="Genome Biol.">
        <title>Annotation of the Drosophila melanogaster euchromatic genome: a systematic review.</title>
        <authorList>
            <person name="Misra S."/>
            <person name="Crosby M.A."/>
            <person name="Mungall C.J."/>
            <person name="Matthews B.B."/>
            <person name="Campbell K.S."/>
            <person name="Hradecky P."/>
            <person name="Huang Y."/>
            <person name="Kaminker J.S."/>
            <person name="Millburn G.H."/>
            <person name="Prochnik S.E."/>
            <person name="Smith C.D."/>
            <person name="Tupy J.L."/>
            <person name="Whitfield E.J."/>
            <person name="Bayraktaroglu L."/>
            <person name="Berman B.P."/>
            <person name="Bettencourt B.R."/>
            <person name="Celniker S.E."/>
            <person name="de Grey A.D.N.J."/>
            <person name="Drysdale R.A."/>
            <person name="Harris N.L."/>
            <person name="Richter J."/>
            <person name="Russo S."/>
            <person name="Schroeder A.J."/>
            <person name="Shu S.Q."/>
            <person name="Stapleton M."/>
            <person name="Yamada C."/>
            <person name="Ashburner M."/>
            <person name="Gelbart W.M."/>
            <person name="Rubin G.M."/>
            <person name="Lewis S.E."/>
        </authorList>
    </citation>
    <scope>GENOME REANNOTATION</scope>
    <source>
        <strain>Berkeley</strain>
    </source>
</reference>
<reference key="4">
    <citation type="journal article" date="2002" name="Genome Biol.">
        <title>A Drosophila full-length cDNA resource.</title>
        <authorList>
            <person name="Stapleton M."/>
            <person name="Carlson J.W."/>
            <person name="Brokstein P."/>
            <person name="Yu C."/>
            <person name="Champe M."/>
            <person name="George R.A."/>
            <person name="Guarin H."/>
            <person name="Kronmiller B."/>
            <person name="Pacleb J.M."/>
            <person name="Park S."/>
            <person name="Wan K.H."/>
            <person name="Rubin G.M."/>
            <person name="Celniker S.E."/>
        </authorList>
    </citation>
    <scope>NUCLEOTIDE SEQUENCE [LARGE SCALE MRNA]</scope>
    <source>
        <strain>Berkeley</strain>
        <tissue>Embryo</tissue>
    </source>
</reference>
<reference key="5">
    <citation type="journal article" date="1990" name="Genes Dev.">
        <title>The serendipity alpha gene encodes a membrane-associated protein required for the cellularization of the Drosophila embryo.</title>
        <authorList>
            <person name="Schweisguth F."/>
            <person name="Lepesant J.-A."/>
            <person name="Vincent A."/>
        </authorList>
    </citation>
    <scope>FUNCTION</scope>
    <scope>SUBCELLULAR LOCATION</scope>
    <scope>TISSUE SPECIFICITY</scope>
    <scope>DEVELOPMENTAL STAGE</scope>
</reference>
<comment type="function">
    <text evidence="1">Required for the cellularization of the syncytial blastoderm embryo. Involved in the localization of the actin filaments just prior to and during plasma membrane invagination. Sry-alpha together with nullo and bnk may provide auxiliary functions, by acting both to stabilize a large and dynamic microfilament structure and regulate its functions.</text>
</comment>
<comment type="subcellular location">
    <subcellularLocation>
        <location evidence="1">Cytoplasm</location>
    </subcellularLocation>
    <subcellularLocation>
        <location evidence="1">Cell membrane</location>
        <topology evidence="1">Peripheral membrane protein</topology>
        <orientation evidence="1">Cytoplasmic side</orientation>
    </subcellularLocation>
    <text>Inner membrane-associated and cytoplasmic. Colocalizes with the structural transitions in the microfilament network during cellularization.</text>
</comment>
<comment type="tissue specificity">
    <text evidence="1">Transient expression in blastoderm from nuclear cycle 11 to the onset of gastrulation.</text>
</comment>
<comment type="developmental stage">
    <text evidence="1">Transcript levels rise steadily during syncytial stages to reach a peak in early cycle 14 and then decline rapidly during cellularization.</text>
</comment>
<sequence length="530" mass="59385">MEQLLAQLHTCSELIAEGYSSTGNIGWLNEFCATFLDFASDLKARLPEVAPSGANLDVETIFLCLTQVVTCITHLERTISMEAPHMTRQHFLDRLDWCLRRLLVSLTQLEGNVTPVKNLEDHSFVELMDLALDHLDDYMEKLAQQRNNSLHILEESFTEDTYQLASIVNHIVRHALAFANVAIHSDKKALTALCETLLAECATFHEEAGEPNSGHRKLEALSLERALYALESFLNEALLHLLFVSLIDLENASVEKLKDALQRDPAGAQELISAFDTNMDRIQQIGVLAIAFSQDIKTKTIVRSCLASLESLDACIVPALQLPESTSSAHHAEVLQEHFNQELLIFRNVIHEIIDSCSLINNYLDMLGERIHVQDKSHLKLIVQRGGVVVDHFRLPVNYSGLSEDGKRVHKDLILILRECQAVVNLDVPVDPKRIVKRLKILYSVLAKLRDLICRDNLEPDSSVASEAQVPSSATRTFVRSSRSFGKRHRSFVKQTGNCSVFGPQDSLAESGHSESDLISFQITEILRLD</sequence>
<name>SRYA_DROME</name>
<accession>P07666</accession>
<accession>Q9VAB4</accession>
<organism>
    <name type="scientific">Drosophila melanogaster</name>
    <name type="common">Fruit fly</name>
    <dbReference type="NCBI Taxonomy" id="7227"/>
    <lineage>
        <taxon>Eukaryota</taxon>
        <taxon>Metazoa</taxon>
        <taxon>Ecdysozoa</taxon>
        <taxon>Arthropoda</taxon>
        <taxon>Hexapoda</taxon>
        <taxon>Insecta</taxon>
        <taxon>Pterygota</taxon>
        <taxon>Neoptera</taxon>
        <taxon>Endopterygota</taxon>
        <taxon>Diptera</taxon>
        <taxon>Brachycera</taxon>
        <taxon>Muscomorpha</taxon>
        <taxon>Ephydroidea</taxon>
        <taxon>Drosophilidae</taxon>
        <taxon>Drosophila</taxon>
        <taxon>Sophophora</taxon>
    </lineage>
</organism>
<dbReference type="EMBL" id="X03121">
    <property type="protein sequence ID" value="CAA26897.1"/>
    <property type="molecule type" value="Genomic_DNA"/>
</dbReference>
<dbReference type="EMBL" id="AE014297">
    <property type="protein sequence ID" value="AAF56999.1"/>
    <property type="molecule type" value="Genomic_DNA"/>
</dbReference>
<dbReference type="EMBL" id="AY071374">
    <property type="protein sequence ID" value="AAL48996.1"/>
    <property type="molecule type" value="mRNA"/>
</dbReference>
<dbReference type="PIR" id="B23351">
    <property type="entry name" value="B23351"/>
</dbReference>
<dbReference type="RefSeq" id="NP_001303490.1">
    <property type="nucleotide sequence ID" value="NM_001316561.1"/>
</dbReference>
<dbReference type="RefSeq" id="NP_524580.1">
    <property type="nucleotide sequence ID" value="NM_079841.3"/>
</dbReference>
<dbReference type="SMR" id="P07666"/>
<dbReference type="BioGRID" id="68427">
    <property type="interactions" value="57"/>
</dbReference>
<dbReference type="DIP" id="DIP-19017N"/>
<dbReference type="FunCoup" id="P07666">
    <property type="interactions" value="55"/>
</dbReference>
<dbReference type="IntAct" id="P07666">
    <property type="interactions" value="29"/>
</dbReference>
<dbReference type="STRING" id="7227.FBpp0312402"/>
<dbReference type="PaxDb" id="7227-FBpp0084923"/>
<dbReference type="DNASU" id="43571"/>
<dbReference type="EnsemblMetazoa" id="FBtr0085557">
    <property type="protein sequence ID" value="FBpp0084923"/>
    <property type="gene ID" value="FBgn0003510"/>
</dbReference>
<dbReference type="EnsemblMetazoa" id="FBtr0346862">
    <property type="protein sequence ID" value="FBpp0312402"/>
    <property type="gene ID" value="FBgn0003510"/>
</dbReference>
<dbReference type="GeneID" id="43571"/>
<dbReference type="KEGG" id="dme:Dmel_CG17957"/>
<dbReference type="AGR" id="FB:FBgn0003510"/>
<dbReference type="CTD" id="43571"/>
<dbReference type="FlyBase" id="FBgn0003510">
    <property type="gene designation" value="Sry-alpha"/>
</dbReference>
<dbReference type="VEuPathDB" id="VectorBase:FBgn0003510"/>
<dbReference type="eggNOG" id="ENOG502SBC0">
    <property type="taxonomic scope" value="Eukaryota"/>
</dbReference>
<dbReference type="GeneTree" id="ENSGT00520000058538"/>
<dbReference type="HOGENOM" id="CLU_030377_0_0_1"/>
<dbReference type="InParanoid" id="P07666"/>
<dbReference type="OMA" id="CIVPAFQ"/>
<dbReference type="OrthoDB" id="6342160at2759"/>
<dbReference type="PhylomeDB" id="P07666"/>
<dbReference type="Reactome" id="R-DME-418990">
    <property type="pathway name" value="Adherens junctions interactions"/>
</dbReference>
<dbReference type="Reactome" id="R-DME-5218920">
    <property type="pathway name" value="VEGFR2 mediated vascular permeability"/>
</dbReference>
<dbReference type="Reactome" id="R-DME-525793">
    <property type="pathway name" value="Myogenesis"/>
</dbReference>
<dbReference type="SignaLink" id="P07666"/>
<dbReference type="BioGRID-ORCS" id="43571">
    <property type="hits" value="0 hits in 1 CRISPR screen"/>
</dbReference>
<dbReference type="GenomeRNAi" id="43571"/>
<dbReference type="PRO" id="PR:P07666"/>
<dbReference type="Proteomes" id="UP000000803">
    <property type="component" value="Chromosome 3R"/>
</dbReference>
<dbReference type="Bgee" id="FBgn0003510">
    <property type="expression patterns" value="Expressed in pole cell and 3 other cell types or tissues"/>
</dbReference>
<dbReference type="GO" id="GO:0005912">
    <property type="term" value="C:adherens junction"/>
    <property type="evidence" value="ECO:0000318"/>
    <property type="project" value="GO_Central"/>
</dbReference>
<dbReference type="GO" id="GO:0016342">
    <property type="term" value="C:catenin complex"/>
    <property type="evidence" value="ECO:0000318"/>
    <property type="project" value="GO_Central"/>
</dbReference>
<dbReference type="GO" id="GO:0032154">
    <property type="term" value="C:cleavage furrow"/>
    <property type="evidence" value="ECO:0000314"/>
    <property type="project" value="FlyBase"/>
</dbReference>
<dbReference type="GO" id="GO:0005829">
    <property type="term" value="C:cytosol"/>
    <property type="evidence" value="ECO:0000314"/>
    <property type="project" value="FlyBase"/>
</dbReference>
<dbReference type="GO" id="GO:0005886">
    <property type="term" value="C:plasma membrane"/>
    <property type="evidence" value="ECO:0000314"/>
    <property type="project" value="FlyBase"/>
</dbReference>
<dbReference type="GO" id="GO:0051015">
    <property type="term" value="F:actin filament binding"/>
    <property type="evidence" value="ECO:0000318"/>
    <property type="project" value="GO_Central"/>
</dbReference>
<dbReference type="GO" id="GO:0008013">
    <property type="term" value="F:beta-catenin binding"/>
    <property type="evidence" value="ECO:0000318"/>
    <property type="project" value="GO_Central"/>
</dbReference>
<dbReference type="GO" id="GO:0007015">
    <property type="term" value="P:actin filament organization"/>
    <property type="evidence" value="ECO:0000315"/>
    <property type="project" value="FlyBase"/>
</dbReference>
<dbReference type="GO" id="GO:0016477">
    <property type="term" value="P:cell migration"/>
    <property type="evidence" value="ECO:0000318"/>
    <property type="project" value="GO_Central"/>
</dbReference>
<dbReference type="GO" id="GO:0098609">
    <property type="term" value="P:cell-cell adhesion"/>
    <property type="evidence" value="ECO:0000318"/>
    <property type="project" value="GO_Central"/>
</dbReference>
<dbReference type="GO" id="GO:0007349">
    <property type="term" value="P:cellularization"/>
    <property type="evidence" value="ECO:0000315"/>
    <property type="project" value="FlyBase"/>
</dbReference>
<dbReference type="Gene3D" id="1.20.120.230">
    <property type="entry name" value="Alpha-catenin/vinculin-like"/>
    <property type="match status" value="1"/>
</dbReference>
<dbReference type="InterPro" id="IPR008837">
    <property type="entry name" value="Serendipity_A"/>
</dbReference>
<dbReference type="PANTHER" id="PTHR18914">
    <property type="entry name" value="ALPHA CATENIN"/>
    <property type="match status" value="1"/>
</dbReference>
<dbReference type="PANTHER" id="PTHR18914:SF33">
    <property type="entry name" value="RE47911P-RELATED"/>
    <property type="match status" value="1"/>
</dbReference>
<dbReference type="Pfam" id="PF05482">
    <property type="entry name" value="Serendipity_A"/>
    <property type="match status" value="1"/>
</dbReference>
<keyword id="KW-1003">Cell membrane</keyword>
<keyword id="KW-0963">Cytoplasm</keyword>
<keyword id="KW-0217">Developmental protein</keyword>
<keyword id="KW-0472">Membrane</keyword>
<keyword id="KW-1185">Reference proteome</keyword>
<protein>
    <recommendedName>
        <fullName>Serendipity locus protein alpha</fullName>
    </recommendedName>
</protein>
<proteinExistence type="evidence at transcript level"/>
<gene>
    <name type="primary">Sry-alpha</name>
    <name type="synonym">Sry-a</name>
    <name type="ORF">CG17957</name>
</gene>
<evidence type="ECO:0000269" key="1">
    <source>
    </source>
</evidence>
<feature type="chain" id="PRO_0000072197" description="Serendipity locus protein alpha">
    <location>
        <begin position="1"/>
        <end position="530"/>
    </location>
</feature>